<evidence type="ECO:0000250" key="1"/>
<evidence type="ECO:0000255" key="2">
    <source>
        <dbReference type="HAMAP-Rule" id="MF_00403"/>
    </source>
</evidence>
<evidence type="ECO:0000256" key="3">
    <source>
        <dbReference type="SAM" id="MobiDB-lite"/>
    </source>
</evidence>
<evidence type="ECO:0000305" key="4"/>
<proteinExistence type="inferred from homology"/>
<organism>
    <name type="scientific">Paracoccus denitrificans (strain Pd 1222)</name>
    <dbReference type="NCBI Taxonomy" id="318586"/>
    <lineage>
        <taxon>Bacteria</taxon>
        <taxon>Pseudomonadati</taxon>
        <taxon>Pseudomonadota</taxon>
        <taxon>Alphaproteobacteria</taxon>
        <taxon>Rhodobacterales</taxon>
        <taxon>Paracoccaceae</taxon>
        <taxon>Paracoccus</taxon>
    </lineage>
</organism>
<keyword id="KW-0488">Methylation</keyword>
<keyword id="KW-1185">Reference proteome</keyword>
<keyword id="KW-0687">Ribonucleoprotein</keyword>
<keyword id="KW-0689">Ribosomal protein</keyword>
<keyword id="KW-0694">RNA-binding</keyword>
<keyword id="KW-0699">rRNA-binding</keyword>
<keyword id="KW-0820">tRNA-binding</keyword>
<dbReference type="EMBL" id="CP000489">
    <property type="protein sequence ID" value="ABL68865.1"/>
    <property type="molecule type" value="Genomic_DNA"/>
</dbReference>
<dbReference type="RefSeq" id="WP_010399029.1">
    <property type="nucleotide sequence ID" value="NC_008686.1"/>
</dbReference>
<dbReference type="SMR" id="A1B021"/>
<dbReference type="STRING" id="318586.Pden_0753"/>
<dbReference type="EnsemblBacteria" id="ABL68865">
    <property type="protein sequence ID" value="ABL68865"/>
    <property type="gene ID" value="Pden_0753"/>
</dbReference>
<dbReference type="GeneID" id="93451977"/>
<dbReference type="KEGG" id="pde:Pden_0753"/>
<dbReference type="eggNOG" id="COG0048">
    <property type="taxonomic scope" value="Bacteria"/>
</dbReference>
<dbReference type="HOGENOM" id="CLU_104295_1_2_5"/>
<dbReference type="OrthoDB" id="9802366at2"/>
<dbReference type="Proteomes" id="UP000000361">
    <property type="component" value="Chromosome 1"/>
</dbReference>
<dbReference type="GO" id="GO:0015935">
    <property type="term" value="C:small ribosomal subunit"/>
    <property type="evidence" value="ECO:0007669"/>
    <property type="project" value="InterPro"/>
</dbReference>
<dbReference type="GO" id="GO:0019843">
    <property type="term" value="F:rRNA binding"/>
    <property type="evidence" value="ECO:0007669"/>
    <property type="project" value="UniProtKB-UniRule"/>
</dbReference>
<dbReference type="GO" id="GO:0003735">
    <property type="term" value="F:structural constituent of ribosome"/>
    <property type="evidence" value="ECO:0007669"/>
    <property type="project" value="InterPro"/>
</dbReference>
<dbReference type="GO" id="GO:0000049">
    <property type="term" value="F:tRNA binding"/>
    <property type="evidence" value="ECO:0007669"/>
    <property type="project" value="UniProtKB-UniRule"/>
</dbReference>
<dbReference type="GO" id="GO:0006412">
    <property type="term" value="P:translation"/>
    <property type="evidence" value="ECO:0007669"/>
    <property type="project" value="UniProtKB-UniRule"/>
</dbReference>
<dbReference type="CDD" id="cd03368">
    <property type="entry name" value="Ribosomal_S12"/>
    <property type="match status" value="1"/>
</dbReference>
<dbReference type="FunFam" id="2.40.50.140:FF:000001">
    <property type="entry name" value="30S ribosomal protein S12"/>
    <property type="match status" value="1"/>
</dbReference>
<dbReference type="Gene3D" id="2.40.50.140">
    <property type="entry name" value="Nucleic acid-binding proteins"/>
    <property type="match status" value="1"/>
</dbReference>
<dbReference type="HAMAP" id="MF_00403_B">
    <property type="entry name" value="Ribosomal_uS12_B"/>
    <property type="match status" value="1"/>
</dbReference>
<dbReference type="InterPro" id="IPR012340">
    <property type="entry name" value="NA-bd_OB-fold"/>
</dbReference>
<dbReference type="InterPro" id="IPR006032">
    <property type="entry name" value="Ribosomal_uS12"/>
</dbReference>
<dbReference type="InterPro" id="IPR005679">
    <property type="entry name" value="Ribosomal_uS12_bac"/>
</dbReference>
<dbReference type="NCBIfam" id="TIGR00981">
    <property type="entry name" value="rpsL_bact"/>
    <property type="match status" value="1"/>
</dbReference>
<dbReference type="PANTHER" id="PTHR11652">
    <property type="entry name" value="30S RIBOSOMAL PROTEIN S12 FAMILY MEMBER"/>
    <property type="match status" value="1"/>
</dbReference>
<dbReference type="Pfam" id="PF00164">
    <property type="entry name" value="Ribosom_S12_S23"/>
    <property type="match status" value="1"/>
</dbReference>
<dbReference type="PIRSF" id="PIRSF002133">
    <property type="entry name" value="Ribosomal_S12/S23"/>
    <property type="match status" value="1"/>
</dbReference>
<dbReference type="PRINTS" id="PR01034">
    <property type="entry name" value="RIBOSOMALS12"/>
</dbReference>
<dbReference type="SUPFAM" id="SSF50249">
    <property type="entry name" value="Nucleic acid-binding proteins"/>
    <property type="match status" value="1"/>
</dbReference>
<dbReference type="PROSITE" id="PS00055">
    <property type="entry name" value="RIBOSOMAL_S12"/>
    <property type="match status" value="1"/>
</dbReference>
<accession>A1B021</accession>
<feature type="chain" id="PRO_0000296009" description="Small ribosomal subunit protein uS12">
    <location>
        <begin position="1"/>
        <end position="123"/>
    </location>
</feature>
<feature type="region of interest" description="Disordered" evidence="3">
    <location>
        <begin position="1"/>
        <end position="30"/>
    </location>
</feature>
<feature type="compositionally biased region" description="Basic residues" evidence="3">
    <location>
        <begin position="9"/>
        <end position="21"/>
    </location>
</feature>
<feature type="modified residue" description="3-methylthioaspartic acid" evidence="1">
    <location>
        <position position="89"/>
    </location>
</feature>
<comment type="function">
    <text evidence="2">With S4 and S5 plays an important role in translational accuracy.</text>
</comment>
<comment type="function">
    <text evidence="2">Interacts with and stabilizes bases of the 16S rRNA that are involved in tRNA selection in the A site and with the mRNA backbone. Located at the interface of the 30S and 50S subunits, it traverses the body of the 30S subunit contacting proteins on the other side and probably holding the rRNA structure together. The combined cluster of proteins S8, S12 and S17 appears to hold together the shoulder and platform of the 30S subunit.</text>
</comment>
<comment type="subunit">
    <text evidence="2">Part of the 30S ribosomal subunit. Contacts proteins S8 and S17. May interact with IF1 in the 30S initiation complex.</text>
</comment>
<comment type="similarity">
    <text evidence="2">Belongs to the universal ribosomal protein uS12 family.</text>
</comment>
<gene>
    <name evidence="2" type="primary">rpsL</name>
    <name type="ordered locus">Pden_0753</name>
</gene>
<name>RS12_PARDP</name>
<protein>
    <recommendedName>
        <fullName evidence="2">Small ribosomal subunit protein uS12</fullName>
    </recommendedName>
    <alternativeName>
        <fullName evidence="4">30S ribosomal protein S12</fullName>
    </alternativeName>
</protein>
<reference key="1">
    <citation type="submission" date="2006-12" db="EMBL/GenBank/DDBJ databases">
        <title>Complete sequence of chromosome 1 of Paracoccus denitrificans PD1222.</title>
        <authorList>
            <person name="Copeland A."/>
            <person name="Lucas S."/>
            <person name="Lapidus A."/>
            <person name="Barry K."/>
            <person name="Detter J.C."/>
            <person name="Glavina del Rio T."/>
            <person name="Hammon N."/>
            <person name="Israni S."/>
            <person name="Dalin E."/>
            <person name="Tice H."/>
            <person name="Pitluck S."/>
            <person name="Munk A.C."/>
            <person name="Brettin T."/>
            <person name="Bruce D."/>
            <person name="Han C."/>
            <person name="Tapia R."/>
            <person name="Gilna P."/>
            <person name="Schmutz J."/>
            <person name="Larimer F."/>
            <person name="Land M."/>
            <person name="Hauser L."/>
            <person name="Kyrpides N."/>
            <person name="Lykidis A."/>
            <person name="Spiro S."/>
            <person name="Richardson D.J."/>
            <person name="Moir J.W.B."/>
            <person name="Ferguson S.J."/>
            <person name="van Spanning R.J.M."/>
            <person name="Richardson P."/>
        </authorList>
    </citation>
    <scope>NUCLEOTIDE SEQUENCE [LARGE SCALE GENOMIC DNA]</scope>
    <source>
        <strain>Pd 1222</strain>
    </source>
</reference>
<sequence length="123" mass="14177">MPTIQQLIRKPRQPKVQRSKSQHLQSCPQKRGVCTRVYTTTPKKPNSAMRKVAKVRLTNGFEVISYIPGEKHNLQEHSVVLIRGGRVKDLPGVRYHILRGVLDTQGVKDRRQRRSKYGAKRPK</sequence>